<organism evidence="3">
    <name type="scientific">Rana temporaria</name>
    <name type="common">European common frog</name>
    <dbReference type="NCBI Taxonomy" id="8407"/>
    <lineage>
        <taxon>Eukaryota</taxon>
        <taxon>Metazoa</taxon>
        <taxon>Chordata</taxon>
        <taxon>Craniata</taxon>
        <taxon>Vertebrata</taxon>
        <taxon>Euteleostomi</taxon>
        <taxon>Amphibia</taxon>
        <taxon>Batrachia</taxon>
        <taxon>Anura</taxon>
        <taxon>Neobatrachia</taxon>
        <taxon>Ranoidea</taxon>
        <taxon>Ranidae</taxon>
        <taxon>Rana</taxon>
        <taxon>Rana</taxon>
    </lineage>
</organism>
<keyword id="KW-0027">Amidation</keyword>
<keyword id="KW-0878">Amphibian defense peptide</keyword>
<keyword id="KW-0044">Antibiotic</keyword>
<keyword id="KW-0929">Antimicrobial</keyword>
<keyword id="KW-0903">Direct protein sequencing</keyword>
<keyword id="KW-0391">Immunity</keyword>
<keyword id="KW-0399">Innate immunity</keyword>
<keyword id="KW-0964">Secreted</keyword>
<name>TPR_RANTE</name>
<protein>
    <recommendedName>
        <fullName evidence="5">Temporin-1Tr</fullName>
    </recommendedName>
    <alternativeName>
        <fullName evidence="3">Temporin-R</fullName>
    </alternativeName>
</protein>
<dbReference type="GO" id="GO:0005576">
    <property type="term" value="C:extracellular region"/>
    <property type="evidence" value="ECO:0000314"/>
    <property type="project" value="UniProtKB"/>
</dbReference>
<dbReference type="GO" id="GO:0042742">
    <property type="term" value="P:defense response to bacterium"/>
    <property type="evidence" value="ECO:0007669"/>
    <property type="project" value="UniProtKB-KW"/>
</dbReference>
<dbReference type="GO" id="GO:0045087">
    <property type="term" value="P:innate immune response"/>
    <property type="evidence" value="ECO:0007669"/>
    <property type="project" value="UniProtKB-KW"/>
</dbReference>
<reference evidence="4" key="1">
    <citation type="journal article" date="2021" name="Anal. Bioanal. Chem.">
        <title>Differentiation of Central Slovenian and Moscow populations of Rana temporaria frogs using peptide biomarkers of temporins family.</title>
        <authorList>
            <person name="Samgina T.Y."/>
            <person name="Vasileva I.D."/>
            <person name="Kovalev S.V."/>
            <person name="Trebse P."/>
            <person name="Torkar G."/>
            <person name="Surin A.K."/>
            <person name="Zubarev R.A."/>
            <person name="Lebedev A.T."/>
        </authorList>
    </citation>
    <scope>PROTEIN SEQUENCE</scope>
    <scope>IDENTIFICATION BY MASS SPECTROMETRY</scope>
    <scope>SUBCELLULAR LOCATION</scope>
    <scope>AMIDATION AT LEU-16</scope>
    <source>
        <tissue evidence="3">Skin secretion</tissue>
    </source>
</reference>
<proteinExistence type="evidence at protein level"/>
<feature type="peptide" id="PRO_0000456398" description="Temporin-1Tr" evidence="2">
    <location>
        <begin position="1"/>
        <end position="16"/>
    </location>
</feature>
<feature type="modified residue" description="Leucine amide" evidence="2">
    <location>
        <position position="16"/>
    </location>
</feature>
<feature type="unsure residue" description="L or I" evidence="2">
    <location>
        <position position="1"/>
    </location>
</feature>
<feature type="unsure residue" description="L or I" evidence="2">
    <location>
        <position position="5"/>
    </location>
</feature>
<feature type="unsure residue" description="L or I" evidence="2">
    <location>
        <position position="16"/>
    </location>
</feature>
<sequence>LVPFLGRTLGGLLARL</sequence>
<accession>C0HM32</accession>
<evidence type="ECO:0000250" key="1">
    <source>
        <dbReference type="UniProtKB" id="P79875"/>
    </source>
</evidence>
<evidence type="ECO:0000269" key="2">
    <source>
    </source>
</evidence>
<evidence type="ECO:0000303" key="3">
    <source>
    </source>
</evidence>
<evidence type="ECO:0000305" key="4"/>
<evidence type="ECO:0000305" key="5">
    <source>
    </source>
</evidence>
<comment type="function">
    <text evidence="1">Antimicrobial peptide.</text>
</comment>
<comment type="subcellular location">
    <subcellularLocation>
        <location evidence="2">Secreted</location>
    </subcellularLocation>
</comment>
<comment type="tissue specificity">
    <text evidence="5">Expressed by the skin glands.</text>
</comment>
<comment type="mass spectrometry"/>
<comment type="similarity">
    <text evidence="3">Belongs to the frog skin active peptide (FSAP) family. Temporin subfamily.</text>
</comment>